<sequence>MSKKPGKSAAKRTVNMLKRLASVSPSRGRRTIRRMLDVRGAPRLILALMAFFRFAAIKPTLGLKKRWRSVNKTVAVKHLTNFKKELTTMLDSVNKRKEKKKSFSTALLWITMITAVAGLKISSHRDRPLLMVNKTDVSDAIPVPSVKGTNMCTIRALDVGYTCAYDTTYECPHLEVTMDPEDIDCWCTLESVYVNYGLCKQNHHVRRGRRAINIPHHGESHLENRATPWMDTTKTTKYLTKVENWVIRNPGYALVALATAWMLGSNTPQRVVFMIMMMLIAPAYSLNCLGISNRDFVEGLSGGTWVDIVLEGGSCVTVMAKDKPTLDIKLIRMEAKDLATVRSYCYQATVTDSSTEARCPTMGEAHNSKSLDASYVCKSSYVDRGWGNGCGLFGKGSIQTCVKFSCPGKATGKSIQRENLNYDVAVYVHGPISAAAHGNYTAQLTGKYAAKFSITPSAPTYTANLGEYGEATMECEPRAALDIDNYYVMSLNNKHWLVNRDWFHDLDLPWTGPATESWKNRESLIEFEEPHATRQTVVALGNQEGALHTALAGAIPVEVSSTTLTLNSGHLKCRLKLDKLKIKGTTYAMCKGTFAFAQTPVDTGHGTIVAELTYTGTDGPCKIPISMTADLRDMTPIGRLVTVNPIIPSSAKSQKILVELEPPFGSSFILVGQENNQIKYQWHKTGSTIGNALKTTWKGAQRFAVLGDTAWDFGSVGGIFNSIGKTIHGVFGTAFRSLFGGMSWVTQALMGALLLWLGISARERTVSLIMLSVGGILLFLAVNVHADTGCAIDMARRELKCGSGIFIHNDVETWRNNYKYHPLTPRGFAKVIQMSKDKGVCGIRSVGRLEHEMWEAIAPELNAIFEDNGVDLSVVVKGQTGIYKRAPKRLTETKDEMSFGWKNWGKSFIFSTETANSTFIVDGPESKECPTSDRAWNSLELEDFGFGIISTKIFLKVNEQRGNSCDSAVIGTAVKGNEAVHSDLGFWIQSTKNESWQLERAVLGEVKSCTWPESHTLWGDGVEESDLIIPITLAGPKSHHNMRPGYKTQTKGPWHEETPLVIEFAECPGTTVTQEESCGGRGPSIRTTTASGRTIRNWCCKNCTLPPLRFMAGENCWYGVEVRPKRENEETLIKSKVSAGNGQTIEPFQLGILMAFVFTQEVLRRRWTANLALPTSALLMACFIFGGFTYLDLFRYFILVGAAFAEANSGGDVVHLAMIAAFNIQPVALVTTFFRKNWTNRENMILIIAAACTQMACMELKIELFHVMNSLSLAWMILKALTTGTTSTLAMPFLAALSPPMNWLGLDVVRCLLIMAGVAALISERRESLAKKKGALLISAALALTGAFSPLVLQGALMFTQSLGKRGWPASEVLTAVGMTFALAGSVARLDGGTMAIPLATMAILAVAYVLSGKSTDMWLERCADISWINEAEITGTSPRLDVELDSNGDFKMINDPGVPMWMWTCRMGLMAMAAYNPVLIPVSMAGYWMTVKIHKRGGVMWDVPAPKQFGKTELKPGVYRVMTMGILGRYQSGVGVMWDGVFHTMWHVTQGAALRNGEGRLNPTWGSVRDDLISYGGKWKLSATWNGSEEVQMIAVEPGKAAKNYQTKPGVFKTPAGEIGAITLDFPKGTSGSPIINKAGEITGLYGNGIVLERGAYVSAITQGERQEEETPEAFTPDMLKKRRLTILDLHPGAGKTRRVIPQIVRECVKARLRTVILVPTRVVAAEMAEALRGLPIRYQTSAVKAEHSGNEIVDAMRHATLTQRLLTPAKVPNYNVFVMDEAHFTDPASIAARGYISTKVELGEAAAIFMTATPPGTTDPFPDSNAPIIDQEAEIPDRAWNSGFEWITEYTGKTVWFVPSVRMGNEIAMCLTKAGKKVIQLNRKSYDSEYQKCKGNDWDFVITTDISEMGANFGAHRVIDSRKCVKPVILDGDDRVLMNGPAPITPASAAQRRGRIGRDPTQSGDEYFYGGPTTTDDTGHAHWIEAKILLDNIQLQNGLVAQLYGPERDKVFTTDGEYRLRSEQKKNFVEFLRTGDLPVWLSYKVAEAGYAYTDRRWCFDGPANNTILEVRGDPEVWTRQGEKRILRPRWSDARVYCDNQALRSFKEFAAGKRSAGSVMEVMGRMPDYFWTKTLNAADNLYVLATANKGGRAHQAALEELPDTVETILLMTMMCVASLGMFTLMVHRRGLGKTGLGTLVLATVTVLLWISDVPAPKIAGVLLIAFLLMIVLIPEPEKQRSQTDNHLAIFLVCVLLLIGAVSANEMGWLETTKKDIGKLFRSSGDTQEQSTWQSWAPEVRAATAWAGYAGLTVFLTPLFRHLITTQYVSFSLTAITAQASALFGLSAGYPFVGIDLAVGFLLLGCYGQYNLPTAVATGLLLLAHYGYMIPGWQAEAMRAAQKRTAAGVMKNAVVDGIVATDIPEVDTATPITEKKLGQILLILLCGASLLVKFDTMVLVEAGVLTTSAMATLIEGNANTVWNSTVAVGVCHLMRGAWLAGPSIGWTIVRNLENPKLKRGGGSAPTLGEIWKAQLNQLTREEFMAYRRDGILEVDRTQARRARQSGITTGGHPVSRGTAKLRWMVERGFVRPIGKVVDLGCGRGGWSYYCATLRHVQEVRGYTKGGPGHEEPVMMQSYGWNIVTMKSGVDVFYKPTESCDTLLCDIGESSSSVGVEEARTLRVLDMVEPWLRAANSFCIKVLCPYTPKVIERLERLQRAYGGGLVRVPLSRNSTHEMYWVSGASSNIINAVTVTSQILVQRMNKGCRHGPRYEEDVCLGSGTRAVATQASPSDHTKIKHRLERLRKEFSATWHIDLEHPYRTWHYHGSYEVQPTGSANSMVNGVVRLLSKPWDAITSVVTMAMTDTTPFGQQRVFKEKVDTRAPDPAVGVAQALDITTGWLWTFLARSKKPRMCTREEFIAKVNSNAALGAVFDEQNQWSTAREAVEDPAFWNLVDEERKAHLAGRCETCIYNMMGKREKKLGEFGKAKGSRAIWYMWLGARFLEFEALGFLNEDHWMSRENSLGGVEGQGLQKLGYILRDISHLEGGNMFADDTAGWDTRITRADLENEAKVMNMMDGEHKQLAKAIIELTYRHKVVKVMRPARGGKTVMDIISREDQRGSGQVVTYALNTFTNLAAQLVRCMEGEELLTESDVHGLSPKKKQAVRNWLIQNGRERLSRMAVSGDDCVVKPIDDRFASALHFLNGMAKIRKDTQEWKPSVGWSNWQEVPFGSHHFNELLMKDGRTIVVPCRSQDELVGRARVSPGSGWSLRETACLSKAYAQMWLLMYFHRRDLRLMANAICSAVPVDWVPTGRTTWSIHGKGEWMTTEDMLQVWNRVWIEDNEHMEDKTPITSWTDIPYIGKREDQWCGSLIGTRQRATWAENIYTPIMQIRNLIGDEKYVDCMVSQHRFETPSPVLFTGAI</sequence>
<name>POLG_ILHV</name>
<protein>
    <recommendedName>
        <fullName>Genome polyprotein</fullName>
    </recommendedName>
    <component>
        <recommendedName>
            <fullName>Capsid protein C</fullName>
        </recommendedName>
        <alternativeName>
            <fullName>Core protein</fullName>
        </alternativeName>
    </component>
    <component>
        <recommendedName>
            <fullName>Protein prM</fullName>
        </recommendedName>
    </component>
    <component>
        <recommendedName>
            <fullName>Peptide pr</fullName>
        </recommendedName>
    </component>
    <component>
        <recommendedName>
            <fullName>Small envelope protein M</fullName>
        </recommendedName>
        <alternativeName>
            <fullName>Matrix protein</fullName>
        </alternativeName>
    </component>
    <component>
        <recommendedName>
            <fullName>Envelope protein E</fullName>
        </recommendedName>
    </component>
    <component>
        <recommendedName>
            <fullName>Non-structural protein 1</fullName>
            <shortName>NS1</shortName>
        </recommendedName>
    </component>
    <component>
        <recommendedName>
            <fullName>Non-structural protein 2A</fullName>
            <shortName>NS2A</shortName>
        </recommendedName>
    </component>
    <component>
        <recommendedName>
            <fullName>Serine protease subunit NS2B</fullName>
        </recommendedName>
        <alternativeName>
            <fullName>Flavivirin protease NS2B regulatory subunit</fullName>
        </alternativeName>
        <alternativeName>
            <fullName>Non-structural protein 2B</fullName>
        </alternativeName>
    </component>
    <component>
        <recommendedName>
            <fullName>Serine protease NS3</fullName>
            <ecNumber>3.4.21.91</ecNumber>
            <ecNumber>3.6.1.15</ecNumber>
            <ecNumber>3.6.4.13</ecNumber>
        </recommendedName>
        <alternativeName>
            <fullName>Flavivirin protease NS3 catalytic subunit</fullName>
        </alternativeName>
        <alternativeName>
            <fullName>Non-structural protein 3</fullName>
        </alternativeName>
    </component>
    <component>
        <recommendedName>
            <fullName>Non-structural protein 4A</fullName>
            <shortName>NS4A</shortName>
        </recommendedName>
    </component>
    <component>
        <recommendedName>
            <fullName>Peptide 2k</fullName>
        </recommendedName>
    </component>
    <component>
        <recommendedName>
            <fullName>Non-structural protein 4B</fullName>
            <shortName>NS4B</shortName>
        </recommendedName>
    </component>
    <component>
        <recommendedName>
            <fullName>RNA-directed RNA polymerase NS5</fullName>
            <ecNumber evidence="17">2.1.1.56</ecNumber>
            <ecNumber evidence="17">2.1.1.57</ecNumber>
            <ecNumber evidence="12">2.7.7.48</ecNumber>
        </recommendedName>
        <alternativeName>
            <fullName>Non-structural protein 5</fullName>
        </alternativeName>
    </component>
</protein>
<reference key="1">
    <citation type="journal article" date="2005" name="Clin. Microbiol. Rev.">
        <title>Biological transmission of arboviruses: reexamination of and new insights into components, mechanisms, and unique traits as well as their evolutionary trends.</title>
        <authorList>
            <person name="Kuno G."/>
            <person name="Chang G.J."/>
        </authorList>
    </citation>
    <scope>NUCLEOTIDE SEQUENCE [LARGE SCALE GENOMIC RNA]</scope>
</reference>
<dbReference type="EC" id="3.4.21.91"/>
<dbReference type="EC" id="3.6.1.15"/>
<dbReference type="EC" id="3.6.4.13"/>
<dbReference type="EC" id="2.1.1.56" evidence="17"/>
<dbReference type="EC" id="2.1.1.57" evidence="17"/>
<dbReference type="EC" id="2.7.7.48" evidence="12"/>
<dbReference type="EMBL" id="AY632539">
    <property type="protein sequence ID" value="AAV34155.1"/>
    <property type="molecule type" value="Genomic_RNA"/>
</dbReference>
<dbReference type="RefSeq" id="YP_001040006.1">
    <property type="nucleotide sequence ID" value="NC_009028.2"/>
</dbReference>
<dbReference type="PDB" id="7WD4">
    <property type="method" value="X-ray"/>
    <property type="resolution" value="1.75 A"/>
    <property type="chains" value="A=1674-2115"/>
</dbReference>
<dbReference type="PDBsum" id="7WD4"/>
<dbReference type="SMR" id="Q32ZD7"/>
<dbReference type="MEROPS" id="S07.003"/>
<dbReference type="GeneID" id="5075856"/>
<dbReference type="KEGG" id="vg:5075856"/>
<dbReference type="Proteomes" id="UP000149844">
    <property type="component" value="Genome"/>
</dbReference>
<dbReference type="GO" id="GO:0005576">
    <property type="term" value="C:extracellular region"/>
    <property type="evidence" value="ECO:0007669"/>
    <property type="project" value="UniProtKB-SubCell"/>
</dbReference>
<dbReference type="GO" id="GO:0044167">
    <property type="term" value="C:host cell endoplasmic reticulum membrane"/>
    <property type="evidence" value="ECO:0007669"/>
    <property type="project" value="UniProtKB-SubCell"/>
</dbReference>
<dbReference type="GO" id="GO:0042025">
    <property type="term" value="C:host cell nucleus"/>
    <property type="evidence" value="ECO:0007669"/>
    <property type="project" value="UniProtKB-SubCell"/>
</dbReference>
<dbReference type="GO" id="GO:0044220">
    <property type="term" value="C:host cell perinuclear region of cytoplasm"/>
    <property type="evidence" value="ECO:0007669"/>
    <property type="project" value="UniProtKB-SubCell"/>
</dbReference>
<dbReference type="GO" id="GO:0016020">
    <property type="term" value="C:membrane"/>
    <property type="evidence" value="ECO:0007669"/>
    <property type="project" value="UniProtKB-KW"/>
</dbReference>
<dbReference type="GO" id="GO:0019028">
    <property type="term" value="C:viral capsid"/>
    <property type="evidence" value="ECO:0007669"/>
    <property type="project" value="UniProtKB-KW"/>
</dbReference>
<dbReference type="GO" id="GO:0019031">
    <property type="term" value="C:viral envelope"/>
    <property type="evidence" value="ECO:0007669"/>
    <property type="project" value="UniProtKB-KW"/>
</dbReference>
<dbReference type="GO" id="GO:0055036">
    <property type="term" value="C:virion membrane"/>
    <property type="evidence" value="ECO:0007669"/>
    <property type="project" value="UniProtKB-SubCell"/>
</dbReference>
<dbReference type="GO" id="GO:0005524">
    <property type="term" value="F:ATP binding"/>
    <property type="evidence" value="ECO:0007669"/>
    <property type="project" value="UniProtKB-KW"/>
</dbReference>
<dbReference type="GO" id="GO:0016887">
    <property type="term" value="F:ATP hydrolysis activity"/>
    <property type="evidence" value="ECO:0007669"/>
    <property type="project" value="RHEA"/>
</dbReference>
<dbReference type="GO" id="GO:0003725">
    <property type="term" value="F:double-stranded RNA binding"/>
    <property type="evidence" value="ECO:0007669"/>
    <property type="project" value="InterPro"/>
</dbReference>
<dbReference type="GO" id="GO:0046872">
    <property type="term" value="F:metal ion binding"/>
    <property type="evidence" value="ECO:0007669"/>
    <property type="project" value="UniProtKB-KW"/>
</dbReference>
<dbReference type="GO" id="GO:0004483">
    <property type="term" value="F:mRNA (nucleoside-2'-O-)-methyltransferase activity"/>
    <property type="evidence" value="ECO:0007669"/>
    <property type="project" value="UniProtKB-EC"/>
</dbReference>
<dbReference type="GO" id="GO:0004482">
    <property type="term" value="F:mRNA 5'-cap (guanine-N7-)-methyltransferase activity"/>
    <property type="evidence" value="ECO:0007669"/>
    <property type="project" value="UniProtKB-EC"/>
</dbReference>
<dbReference type="GO" id="GO:0046983">
    <property type="term" value="F:protein dimerization activity"/>
    <property type="evidence" value="ECO:0007669"/>
    <property type="project" value="InterPro"/>
</dbReference>
<dbReference type="GO" id="GO:0003724">
    <property type="term" value="F:RNA helicase activity"/>
    <property type="evidence" value="ECO:0007669"/>
    <property type="project" value="UniProtKB-EC"/>
</dbReference>
<dbReference type="GO" id="GO:0003968">
    <property type="term" value="F:RNA-directed RNA polymerase activity"/>
    <property type="evidence" value="ECO:0007669"/>
    <property type="project" value="UniProtKB-KW"/>
</dbReference>
<dbReference type="GO" id="GO:0004252">
    <property type="term" value="F:serine-type endopeptidase activity"/>
    <property type="evidence" value="ECO:0007669"/>
    <property type="project" value="InterPro"/>
</dbReference>
<dbReference type="GO" id="GO:0005198">
    <property type="term" value="F:structural molecule activity"/>
    <property type="evidence" value="ECO:0007669"/>
    <property type="project" value="InterPro"/>
</dbReference>
<dbReference type="GO" id="GO:0075512">
    <property type="term" value="P:clathrin-dependent endocytosis of virus by host cell"/>
    <property type="evidence" value="ECO:0007669"/>
    <property type="project" value="UniProtKB-KW"/>
</dbReference>
<dbReference type="GO" id="GO:0039654">
    <property type="term" value="P:fusion of virus membrane with host endosome membrane"/>
    <property type="evidence" value="ECO:0007669"/>
    <property type="project" value="UniProtKB-KW"/>
</dbReference>
<dbReference type="GO" id="GO:0006508">
    <property type="term" value="P:proteolysis"/>
    <property type="evidence" value="ECO:0007669"/>
    <property type="project" value="UniProtKB-KW"/>
</dbReference>
<dbReference type="GO" id="GO:0039520">
    <property type="term" value="P:symbiont-mediated activation of host autophagy"/>
    <property type="evidence" value="ECO:0007669"/>
    <property type="project" value="UniProtKB-KW"/>
</dbReference>
<dbReference type="GO" id="GO:0052170">
    <property type="term" value="P:symbiont-mediated suppression of host innate immune response"/>
    <property type="evidence" value="ECO:0007669"/>
    <property type="project" value="UniProtKB-KW"/>
</dbReference>
<dbReference type="GO" id="GO:0039563">
    <property type="term" value="P:symbiont-mediated suppression of host JAK-STAT cascade via inhibition of STAT1 activity"/>
    <property type="evidence" value="ECO:0007669"/>
    <property type="project" value="UniProtKB-KW"/>
</dbReference>
<dbReference type="GO" id="GO:0039564">
    <property type="term" value="P:symbiont-mediated suppression of host JAK-STAT cascade via inhibition of STAT2 activity"/>
    <property type="evidence" value="ECO:0007669"/>
    <property type="project" value="UniProtKB-KW"/>
</dbReference>
<dbReference type="GO" id="GO:0039502">
    <property type="term" value="P:symbiont-mediated suppression of host type I interferon-mediated signaling pathway"/>
    <property type="evidence" value="ECO:0007669"/>
    <property type="project" value="UniProtKB-KW"/>
</dbReference>
<dbReference type="GO" id="GO:0039694">
    <property type="term" value="P:viral RNA genome replication"/>
    <property type="evidence" value="ECO:0007669"/>
    <property type="project" value="InterPro"/>
</dbReference>
<dbReference type="GO" id="GO:0019062">
    <property type="term" value="P:virion attachment to host cell"/>
    <property type="evidence" value="ECO:0007669"/>
    <property type="project" value="UniProtKB-KW"/>
</dbReference>
<dbReference type="CDD" id="cd20761">
    <property type="entry name" value="capping_2-OMTase_Flaviviridae"/>
    <property type="match status" value="1"/>
</dbReference>
<dbReference type="CDD" id="cd17931">
    <property type="entry name" value="DEXHc_viral_Ns3"/>
    <property type="match status" value="1"/>
</dbReference>
<dbReference type="CDD" id="cd12149">
    <property type="entry name" value="Flavi_E_C"/>
    <property type="match status" value="1"/>
</dbReference>
<dbReference type="CDD" id="cd17038">
    <property type="entry name" value="Flavi_M"/>
    <property type="match status" value="1"/>
</dbReference>
<dbReference type="CDD" id="cd23204">
    <property type="entry name" value="Flavivirus_RdRp"/>
    <property type="match status" value="1"/>
</dbReference>
<dbReference type="CDD" id="cd18806">
    <property type="entry name" value="SF2_C_viral"/>
    <property type="match status" value="1"/>
</dbReference>
<dbReference type="FunFam" id="1.10.260.90:FF:000001">
    <property type="entry name" value="Genome polyprotein"/>
    <property type="match status" value="1"/>
</dbReference>
<dbReference type="FunFam" id="3.30.70.2840:FF:000001">
    <property type="entry name" value="Genome polyprotein"/>
    <property type="match status" value="1"/>
</dbReference>
<dbReference type="FunFam" id="3.30.70.2840:FF:000002">
    <property type="entry name" value="Genome polyprotein"/>
    <property type="match status" value="1"/>
</dbReference>
<dbReference type="FunFam" id="3.40.50.150:FF:000105">
    <property type="entry name" value="Genome polyprotein"/>
    <property type="match status" value="1"/>
</dbReference>
<dbReference type="FunFam" id="3.40.50.300:FF:000763">
    <property type="entry name" value="Genome polyprotein"/>
    <property type="match status" value="1"/>
</dbReference>
<dbReference type="Gene3D" id="1.10.10.930">
    <property type="match status" value="1"/>
</dbReference>
<dbReference type="Gene3D" id="1.10.260.90">
    <property type="match status" value="1"/>
</dbReference>
<dbReference type="Gene3D" id="1.20.1280.260">
    <property type="match status" value="1"/>
</dbReference>
<dbReference type="Gene3D" id="2.40.10.120">
    <property type="match status" value="2"/>
</dbReference>
<dbReference type="Gene3D" id="2.60.40.350">
    <property type="match status" value="1"/>
</dbReference>
<dbReference type="Gene3D" id="1.10.8.970">
    <property type="entry name" value="Flavivirus envelope glycoprotein M-like"/>
    <property type="match status" value="1"/>
</dbReference>
<dbReference type="Gene3D" id="2.60.260.50">
    <property type="entry name" value="Flavivirus polyprotein propeptide domain"/>
    <property type="match status" value="1"/>
</dbReference>
<dbReference type="Gene3D" id="3.30.70.2840">
    <property type="entry name" value="Flavivirus RNA-directed RNA polymerase, thumb domain"/>
    <property type="match status" value="3"/>
</dbReference>
<dbReference type="Gene3D" id="3.40.50.300">
    <property type="entry name" value="P-loop containing nucleotide triphosphate hydrolases"/>
    <property type="match status" value="2"/>
</dbReference>
<dbReference type="Gene3D" id="2.60.98.10">
    <property type="entry name" value="Tick-borne Encephalitis virus Glycoprotein, domain 1"/>
    <property type="match status" value="1"/>
</dbReference>
<dbReference type="Gene3D" id="3.40.50.150">
    <property type="entry name" value="Vaccinia Virus protein VP39"/>
    <property type="match status" value="1"/>
</dbReference>
<dbReference type="Gene3D" id="3.30.67.10">
    <property type="entry name" value="Viral Envelope Glycoprotein, domain 2"/>
    <property type="match status" value="1"/>
</dbReference>
<dbReference type="Gene3D" id="3.30.387.10">
    <property type="entry name" value="Viral Envelope Glycoprotein, domain 3"/>
    <property type="match status" value="1"/>
</dbReference>
<dbReference type="InterPro" id="IPR043502">
    <property type="entry name" value="DNA/RNA_pol_sf"/>
</dbReference>
<dbReference type="InterPro" id="IPR000069">
    <property type="entry name" value="Env_glycoprot_M_flavivir"/>
</dbReference>
<dbReference type="InterPro" id="IPR038302">
    <property type="entry name" value="Env_glycoprot_M_sf_flavivir"/>
</dbReference>
<dbReference type="InterPro" id="IPR013755">
    <property type="entry name" value="Flav_gly_cen_dom_subdom1"/>
</dbReference>
<dbReference type="InterPro" id="IPR001122">
    <property type="entry name" value="Flavi_capsidC"/>
</dbReference>
<dbReference type="InterPro" id="IPR037172">
    <property type="entry name" value="Flavi_capsidC_sf"/>
</dbReference>
<dbReference type="InterPro" id="IPR011492">
    <property type="entry name" value="Flavi_DEAD"/>
</dbReference>
<dbReference type="InterPro" id="IPR027287">
    <property type="entry name" value="Flavi_E_Ig-like"/>
</dbReference>
<dbReference type="InterPro" id="IPR026470">
    <property type="entry name" value="Flavi_E_Stem/Anchor_dom"/>
</dbReference>
<dbReference type="InterPro" id="IPR038345">
    <property type="entry name" value="Flavi_E_Stem/Anchor_dom_sf"/>
</dbReference>
<dbReference type="InterPro" id="IPR011998">
    <property type="entry name" value="Flavi_Glycoprot_E_cen/dimer"/>
</dbReference>
<dbReference type="InterPro" id="IPR001157">
    <property type="entry name" value="Flavi_NS1"/>
</dbReference>
<dbReference type="InterPro" id="IPR000752">
    <property type="entry name" value="Flavi_NS2A"/>
</dbReference>
<dbReference type="InterPro" id="IPR000487">
    <property type="entry name" value="Flavi_NS2B"/>
</dbReference>
<dbReference type="InterPro" id="IPR001850">
    <property type="entry name" value="Flavi_NS3_S7"/>
</dbReference>
<dbReference type="InterPro" id="IPR000404">
    <property type="entry name" value="Flavi_NS4A"/>
</dbReference>
<dbReference type="InterPro" id="IPR001528">
    <property type="entry name" value="Flavi_NS4B"/>
</dbReference>
<dbReference type="InterPro" id="IPR046811">
    <property type="entry name" value="Flavi_NS5_thumb"/>
</dbReference>
<dbReference type="InterPro" id="IPR002535">
    <property type="entry name" value="Flavi_propep"/>
</dbReference>
<dbReference type="InterPro" id="IPR038688">
    <property type="entry name" value="Flavi_propep_sf"/>
</dbReference>
<dbReference type="InterPro" id="IPR047530">
    <property type="entry name" value="Flavi_RdRp"/>
</dbReference>
<dbReference type="InterPro" id="IPR000208">
    <property type="entry name" value="Flavi_RdRp_fingers/palm"/>
</dbReference>
<dbReference type="InterPro" id="IPR000336">
    <property type="entry name" value="Flavivir/Alphavir_Ig-like_sf"/>
</dbReference>
<dbReference type="InterPro" id="IPR014412">
    <property type="entry name" value="Gen_Poly_FLV"/>
</dbReference>
<dbReference type="InterPro" id="IPR036253">
    <property type="entry name" value="Glycoprot_cen/dimer_sf"/>
</dbReference>
<dbReference type="InterPro" id="IPR038055">
    <property type="entry name" value="Glycoprot_E_dimer_dom"/>
</dbReference>
<dbReference type="InterPro" id="IPR013756">
    <property type="entry name" value="GlyE_cen_dom_subdom2"/>
</dbReference>
<dbReference type="InterPro" id="IPR014001">
    <property type="entry name" value="Helicase_ATP-bd"/>
</dbReference>
<dbReference type="InterPro" id="IPR001650">
    <property type="entry name" value="Helicase_C-like"/>
</dbReference>
<dbReference type="InterPro" id="IPR014756">
    <property type="entry name" value="Ig_E-set"/>
</dbReference>
<dbReference type="InterPro" id="IPR026490">
    <property type="entry name" value="mRNA_cap_0/1_MeTrfase"/>
</dbReference>
<dbReference type="InterPro" id="IPR049486">
    <property type="entry name" value="NS3-hel_C_flaviviridae"/>
</dbReference>
<dbReference type="InterPro" id="IPR027417">
    <property type="entry name" value="P-loop_NTPase"/>
</dbReference>
<dbReference type="InterPro" id="IPR009003">
    <property type="entry name" value="Peptidase_S1_PA"/>
</dbReference>
<dbReference type="InterPro" id="IPR007094">
    <property type="entry name" value="RNA-dir_pol_PSvirus"/>
</dbReference>
<dbReference type="InterPro" id="IPR002877">
    <property type="entry name" value="RNA_MeTrfase_FtsJ_dom"/>
</dbReference>
<dbReference type="InterPro" id="IPR029063">
    <property type="entry name" value="SAM-dependent_MTases_sf"/>
</dbReference>
<dbReference type="NCBIfam" id="TIGR04240">
    <property type="entry name" value="flavi_E_stem"/>
    <property type="match status" value="1"/>
</dbReference>
<dbReference type="Pfam" id="PF20907">
    <property type="entry name" value="Flav_NS3-hel_C"/>
    <property type="match status" value="1"/>
</dbReference>
<dbReference type="Pfam" id="PF01003">
    <property type="entry name" value="Flavi_capsid"/>
    <property type="match status" value="1"/>
</dbReference>
<dbReference type="Pfam" id="PF07652">
    <property type="entry name" value="Flavi_DEAD"/>
    <property type="match status" value="1"/>
</dbReference>
<dbReference type="Pfam" id="PF21659">
    <property type="entry name" value="Flavi_E_stem"/>
    <property type="match status" value="1"/>
</dbReference>
<dbReference type="Pfam" id="PF02832">
    <property type="entry name" value="Flavi_glycop_C"/>
    <property type="match status" value="1"/>
</dbReference>
<dbReference type="Pfam" id="PF00869">
    <property type="entry name" value="Flavi_glycoprot"/>
    <property type="match status" value="1"/>
</dbReference>
<dbReference type="Pfam" id="PF01004">
    <property type="entry name" value="Flavi_M"/>
    <property type="match status" value="1"/>
</dbReference>
<dbReference type="Pfam" id="PF00948">
    <property type="entry name" value="Flavi_NS1"/>
    <property type="match status" value="1"/>
</dbReference>
<dbReference type="Pfam" id="PF01005">
    <property type="entry name" value="Flavi_NS2A"/>
    <property type="match status" value="1"/>
</dbReference>
<dbReference type="Pfam" id="PF01002">
    <property type="entry name" value="Flavi_NS2B"/>
    <property type="match status" value="1"/>
</dbReference>
<dbReference type="Pfam" id="PF01350">
    <property type="entry name" value="Flavi_NS4A"/>
    <property type="match status" value="1"/>
</dbReference>
<dbReference type="Pfam" id="PF01349">
    <property type="entry name" value="Flavi_NS4B"/>
    <property type="match status" value="1"/>
</dbReference>
<dbReference type="Pfam" id="PF00972">
    <property type="entry name" value="Flavi_NS5"/>
    <property type="match status" value="1"/>
</dbReference>
<dbReference type="Pfam" id="PF20483">
    <property type="entry name" value="Flavi_NS5_thumb"/>
    <property type="match status" value="1"/>
</dbReference>
<dbReference type="Pfam" id="PF01570">
    <property type="entry name" value="Flavi_propep"/>
    <property type="match status" value="1"/>
</dbReference>
<dbReference type="Pfam" id="PF01728">
    <property type="entry name" value="FtsJ"/>
    <property type="match status" value="1"/>
</dbReference>
<dbReference type="Pfam" id="PF00949">
    <property type="entry name" value="Peptidase_S7"/>
    <property type="match status" value="1"/>
</dbReference>
<dbReference type="PIRSF" id="PIRSF003817">
    <property type="entry name" value="Gen_Poly_FLV"/>
    <property type="match status" value="1"/>
</dbReference>
<dbReference type="SMART" id="SM00487">
    <property type="entry name" value="DEXDc"/>
    <property type="match status" value="1"/>
</dbReference>
<dbReference type="SMART" id="SM00490">
    <property type="entry name" value="HELICc"/>
    <property type="match status" value="1"/>
</dbReference>
<dbReference type="SUPFAM" id="SSF56672">
    <property type="entry name" value="DNA/RNA polymerases"/>
    <property type="match status" value="1"/>
</dbReference>
<dbReference type="SUPFAM" id="SSF81296">
    <property type="entry name" value="E set domains"/>
    <property type="match status" value="1"/>
</dbReference>
<dbReference type="SUPFAM" id="SSF101257">
    <property type="entry name" value="Flavivirus capsid protein C"/>
    <property type="match status" value="1"/>
</dbReference>
<dbReference type="SUPFAM" id="SSF52540">
    <property type="entry name" value="P-loop containing nucleoside triphosphate hydrolases"/>
    <property type="match status" value="2"/>
</dbReference>
<dbReference type="SUPFAM" id="SSF53335">
    <property type="entry name" value="S-adenosyl-L-methionine-dependent methyltransferases"/>
    <property type="match status" value="1"/>
</dbReference>
<dbReference type="SUPFAM" id="SSF50494">
    <property type="entry name" value="Trypsin-like serine proteases"/>
    <property type="match status" value="1"/>
</dbReference>
<dbReference type="SUPFAM" id="SSF56983">
    <property type="entry name" value="Viral glycoprotein, central and dimerisation domains"/>
    <property type="match status" value="1"/>
</dbReference>
<dbReference type="PROSITE" id="PS51527">
    <property type="entry name" value="FLAVIVIRUS_NS2B"/>
    <property type="match status" value="1"/>
</dbReference>
<dbReference type="PROSITE" id="PS51528">
    <property type="entry name" value="FLAVIVIRUS_NS3PRO"/>
    <property type="match status" value="1"/>
</dbReference>
<dbReference type="PROSITE" id="PS51192">
    <property type="entry name" value="HELICASE_ATP_BIND_1"/>
    <property type="match status" value="1"/>
</dbReference>
<dbReference type="PROSITE" id="PS51194">
    <property type="entry name" value="HELICASE_CTER"/>
    <property type="match status" value="1"/>
</dbReference>
<dbReference type="PROSITE" id="PS50507">
    <property type="entry name" value="RDRP_SSRNA_POS"/>
    <property type="match status" value="1"/>
</dbReference>
<dbReference type="PROSITE" id="PS51591">
    <property type="entry name" value="RNA_CAP01_NS5_MT"/>
    <property type="match status" value="1"/>
</dbReference>
<comment type="function">
    <molecule>Capsid protein C</molecule>
    <text evidence="6">Plays a role in virus budding by binding to the cell membrane and gathering the viral RNA into a nucleocapsid that forms the core of a mature virus particle. During virus entry, may induce genome penetration into the host cytoplasm after hemifusion induced by the surface proteins. Can migrate to the cell nucleus where it modulates host functions. Overcomes the anti-viral effects of host EXOC1 by sequestering and degrading the latter through the proteasome degradation pathway.</text>
</comment>
<comment type="function">
    <molecule>Capsid protein C</molecule>
    <text evidence="1">Inhibits RNA silencing by interfering with host Dicer.</text>
</comment>
<comment type="function">
    <molecule>Peptide pr</molecule>
    <text evidence="6">Prevents premature fusion activity of envelope proteins in trans-Golgi by binding to envelope protein E at pH6.0. After virion release in extracellular space, gets dissociated from E dimers.</text>
</comment>
<comment type="function">
    <molecule>Protein prM</molecule>
    <text evidence="6">Acts as a chaperone for envelope protein E during intracellular virion assembly by masking and inactivating envelope protein E fusion peptide. prM is the only viral peptide matured by host furin in the trans-Golgi network probably to avoid catastrophic activation of the viral fusion activity in acidic Golgi compartment prior to virion release. prM-E cleavage is inefficient, and many virions are only partially matured. These uncleaved prM would play a role in immune evasion.</text>
</comment>
<comment type="function">
    <molecule>Small envelope protein M</molecule>
    <text evidence="6">May play a role in virus budding. Exerts cytotoxic effects by activating a mitochondrial apoptotic pathway through M ectodomain. May display a viroporin activity.</text>
</comment>
<comment type="function">
    <molecule>Envelope protein E</molecule>
    <text evidence="6">Binds to host cell surface receptor and mediates fusion between viral and cellular membranes. Envelope protein is synthesized in the endoplasmic reticulum in the form of heterodimer with protein prM. They play a role in virion budding in the ER, and the newly formed immature particle is covered with 60 spikes composed of heterodimer between precursor prM and envelope protein E. The virion is transported to the Golgi apparatus where the low pH causes dissociation of PrM-E heterodimers and formation of E homodimers. prM-E cleavage is inefficient, and many virions are only partially matured. These uncleaved prM would play a role in immune evasion.</text>
</comment>
<comment type="function">
    <molecule>Non-structural protein 1</molecule>
    <text evidence="10">Involved in immune evasion, pathogenesis and viral replication. Once cleaved off the polyprotein, is targeted to three destinations: the viral replication cycle, the plasma membrane and the extracellular compartment. Essential for viral replication. Required for formation of the replication complex and recruitment of other non-structural proteins to the ER-derived membrane structures. Excreted as a hexameric lipoparticle that plays a role against host immune response. Antagonizing the complement function. Binds to the host macrophages and dendritic cells. Inhibits signal transduction originating from Toll-like receptor 3 (TLR3).</text>
</comment>
<comment type="function">
    <molecule>Non-structural protein 2A</molecule>
    <text evidence="3">Component of the viral RNA replication complex that functions in virion assembly and antagonizes the host alpha/beta interferon antiviral response.</text>
</comment>
<comment type="function">
    <molecule>Serine protease subunit NS2B</molecule>
    <text evidence="6 15">Required cofactor for the serine protease function of NS3. May have membrane-destabilizing activity and form viroporins (By similarity).</text>
</comment>
<comment type="function">
    <molecule>Serine protease NS3</molecule>
    <text evidence="16">Displays three enzymatic activities: serine protease, NTPase and RNA helicase. NS3 serine protease, in association with NS2B, performs its autocleavage and cleaves the polyprotein at dibasic sites in the cytoplasm: C-prM, NS2A-NS2B, NS2B-NS3, NS3-NS4A, NS4A-2K and NS4B-NS5. NS3 RNA helicase binds RNA and unwinds dsRNA in the 3' to 5' direction.</text>
</comment>
<comment type="function">
    <molecule>Non-structural protein 4A</molecule>
    <text evidence="10">Regulates the ATPase activity of the NS3 helicase activity. NS4A allows NS3 helicase to conserve energy during unwinding.</text>
</comment>
<comment type="function">
    <molecule>Peptide 2k</molecule>
    <text evidence="6">Functions as a signal peptide for NS4B and is required for the interferon antagonism activity of the latter.</text>
</comment>
<comment type="function">
    <molecule>Non-structural protein 4B</molecule>
    <text evidence="10">Induces the formation of ER-derived membrane vesicles where the viral replication takes place. Inhibits interferon (IFN)-induced host STAT1 phosphorylation and nuclear translocation, thereby preventing the establishment of cellular antiviral state by blocking the IFN-alpha/beta pathway. Inhibits STAT2 translocation in the nucleus after IFN-alpha treatment.</text>
</comment>
<comment type="function">
    <molecule>RNA-directed RNA polymerase NS5</molecule>
    <text evidence="10">Replicates the viral (+) and (-) RNA genome, and performs the capping of genomes in the cytoplasm. NS5 methylates viral RNA cap at guanine N-7 and ribose 2'-O positions. Besides its role in RNA genome replication, also prevents the establishment of cellular antiviral state by blocking the interferon-alpha/beta (IFN-alpha/beta) signaling pathway. Inhibits host TYK2 and STAT2 phosphorylation, thereby preventing activation of JAK-STAT signaling pathway.</text>
</comment>
<comment type="catalytic activity">
    <reaction>
        <text>Selective hydrolysis of -Xaa-Xaa-|-Yaa- bonds in which each of the Xaa can be either Arg or Lys and Yaa can be either Ser or Ala.</text>
        <dbReference type="EC" id="3.4.21.91"/>
    </reaction>
</comment>
<comment type="catalytic activity">
    <reaction evidence="12">
        <text>RNA(n) + a ribonucleoside 5'-triphosphate = RNA(n+1) + diphosphate</text>
        <dbReference type="Rhea" id="RHEA:21248"/>
        <dbReference type="Rhea" id="RHEA-COMP:14527"/>
        <dbReference type="Rhea" id="RHEA-COMP:17342"/>
        <dbReference type="ChEBI" id="CHEBI:33019"/>
        <dbReference type="ChEBI" id="CHEBI:61557"/>
        <dbReference type="ChEBI" id="CHEBI:140395"/>
        <dbReference type="EC" id="2.7.7.48"/>
    </reaction>
</comment>
<comment type="catalytic activity">
    <reaction>
        <text>a ribonucleoside 5'-triphosphate + H2O = a ribonucleoside 5'-diphosphate + phosphate + H(+)</text>
        <dbReference type="Rhea" id="RHEA:23680"/>
        <dbReference type="ChEBI" id="CHEBI:15377"/>
        <dbReference type="ChEBI" id="CHEBI:15378"/>
        <dbReference type="ChEBI" id="CHEBI:43474"/>
        <dbReference type="ChEBI" id="CHEBI:57930"/>
        <dbReference type="ChEBI" id="CHEBI:61557"/>
        <dbReference type="EC" id="3.6.1.15"/>
    </reaction>
</comment>
<comment type="catalytic activity">
    <reaction evidence="10">
        <text>ATP + H2O = ADP + phosphate + H(+)</text>
        <dbReference type="Rhea" id="RHEA:13065"/>
        <dbReference type="ChEBI" id="CHEBI:15377"/>
        <dbReference type="ChEBI" id="CHEBI:15378"/>
        <dbReference type="ChEBI" id="CHEBI:30616"/>
        <dbReference type="ChEBI" id="CHEBI:43474"/>
        <dbReference type="ChEBI" id="CHEBI:456216"/>
        <dbReference type="EC" id="3.6.4.13"/>
    </reaction>
</comment>
<comment type="catalytic activity">
    <reaction evidence="17">
        <text>a 5'-end (5'-triphosphoguanosine)-ribonucleoside in mRNA + S-adenosyl-L-methionine = a 5'-end (N(7)-methyl 5'-triphosphoguanosine)-ribonucleoside in mRNA + S-adenosyl-L-homocysteine</text>
        <dbReference type="Rhea" id="RHEA:67008"/>
        <dbReference type="Rhea" id="RHEA-COMP:17166"/>
        <dbReference type="Rhea" id="RHEA-COMP:17167"/>
        <dbReference type="ChEBI" id="CHEBI:57856"/>
        <dbReference type="ChEBI" id="CHEBI:59789"/>
        <dbReference type="ChEBI" id="CHEBI:156461"/>
        <dbReference type="ChEBI" id="CHEBI:167617"/>
        <dbReference type="EC" id="2.1.1.56"/>
    </reaction>
</comment>
<comment type="catalytic activity">
    <reaction evidence="17">
        <text>a 5'-end (N(7)-methyl 5'-triphosphoguanosine)-ribonucleoside in mRNA + S-adenosyl-L-methionine = a 5'-end (N(7)-methyl 5'-triphosphoguanosine)-(2'-O-methyl-ribonucleoside) in mRNA + S-adenosyl-L-homocysteine + H(+)</text>
        <dbReference type="Rhea" id="RHEA:67020"/>
        <dbReference type="Rhea" id="RHEA-COMP:17167"/>
        <dbReference type="Rhea" id="RHEA-COMP:17168"/>
        <dbReference type="ChEBI" id="CHEBI:15378"/>
        <dbReference type="ChEBI" id="CHEBI:57856"/>
        <dbReference type="ChEBI" id="CHEBI:59789"/>
        <dbReference type="ChEBI" id="CHEBI:156461"/>
        <dbReference type="ChEBI" id="CHEBI:167609"/>
        <dbReference type="EC" id="2.1.1.57"/>
    </reaction>
</comment>
<comment type="subunit">
    <molecule>Capsid protein C</molecule>
    <text evidence="6">Homodimer (By similarity). Interacts (via N-terminus) with host EXOC1 (via C-terminus); this interaction results in EXOC1 degradation through the proteasome degradation pathway (By similarity).</text>
</comment>
<comment type="subunit">
    <molecule>Protein prM</molecule>
    <text evidence="6">Forms heterodimers with envelope protein E in the endoplasmic reticulum and Golgi.</text>
</comment>
<comment type="subunit">
    <molecule>Envelope protein E</molecule>
    <text evidence="6">Homodimer; in the endoplasmic reticulum and Golgi (By similarity). Interacts with protein prM (By similarity). Interacts with non-structural protein 1 (By similarity).</text>
</comment>
<comment type="subunit">
    <molecule>Non-structural protein 1</molecule>
    <text evidence="10">Homodimer; Homohexamer when secreted (By similarity). Interacts with envelope protein E (By similarity). NS1 interacts with NS4B (By similarity). Interacts with host complement protein CFH; this interaction leads to the degradation of C3 (By similarity).</text>
</comment>
<comment type="subunit">
    <molecule>Non-structural protein 2A</molecule>
    <text evidence="1">Interacts (via N-terminus) with serine protease NS3.</text>
</comment>
<comment type="subunit">
    <molecule>Serine protease subunit NS2B</molecule>
    <text evidence="6">Forms a heterodimer with serine protease NS3 (By similarity). May form homooligomers (By similarity).</text>
</comment>
<comment type="subunit">
    <molecule>Serine protease NS3</molecule>
    <text evidence="6">Forms a heterodimer with NS2B (By similarity). Interacts with non-structural protein 2A (via N-terminus) (By similarity). Interacts with NS4B (By similarity). Interacts with unphosphorylated RNA-directed RNA polymerase NS5; this interaction stimulates RNA-directed RNA polymerase NS5 guanylyltransferase activity (By similarity).</text>
</comment>
<comment type="subunit">
    <molecule>Non-structural protein 4B</molecule>
    <text evidence="6">Interacts with serine protease NS3 (By similarity).</text>
</comment>
<comment type="subunit">
    <molecule>RNA-directed RNA polymerase NS5</molecule>
    <text evidence="6">Homodimer. Interacts with host STAT2; this interaction inhibits the phosphorylation of the latter, and, when all viral proteins are present (polyprotein), targets STAT2 for degradation. Interacts with serine protease NS3.</text>
</comment>
<comment type="subcellular location">
    <molecule>Capsid protein C</molecule>
    <subcellularLocation>
        <location evidence="6">Virion</location>
    </subcellularLocation>
    <subcellularLocation>
        <location evidence="6">Host nucleus</location>
    </subcellularLocation>
    <subcellularLocation>
        <location evidence="2">Host cytoplasm</location>
    </subcellularLocation>
    <subcellularLocation>
        <location evidence="2">Host cytoplasm</location>
        <location evidence="2">Host perinuclear region</location>
    </subcellularLocation>
</comment>
<comment type="subcellular location">
    <molecule>Peptide pr</molecule>
    <subcellularLocation>
        <location evidence="6">Secreted</location>
    </subcellularLocation>
</comment>
<comment type="subcellular location">
    <molecule>Small envelope protein M</molecule>
    <subcellularLocation>
        <location evidence="1">Virion membrane</location>
        <topology evidence="1">Multi-pass membrane protein</topology>
    </subcellularLocation>
    <subcellularLocation>
        <location evidence="1">Host endoplasmic reticulum membrane</location>
        <topology evidence="11">Multi-pass membrane protein</topology>
    </subcellularLocation>
    <text evidence="1">ER membrane retention is mediated by the transmembrane domains.</text>
</comment>
<comment type="subcellular location">
    <molecule>Envelope protein E</molecule>
    <subcellularLocation>
        <location evidence="19">Virion membrane</location>
        <topology evidence="1">Multi-pass membrane protein</topology>
    </subcellularLocation>
    <subcellularLocation>
        <location evidence="1">Host endoplasmic reticulum membrane</location>
        <topology evidence="11">Multi-pass membrane protein</topology>
    </subcellularLocation>
    <text evidence="1">ER membrane retention is mediated by the transmembrane domains.</text>
</comment>
<comment type="subcellular location">
    <molecule>Non-structural protein 1</molecule>
    <subcellularLocation>
        <location evidence="6">Secreted</location>
    </subcellularLocation>
    <subcellularLocation>
        <location>Host endoplasmic reticulum membrane</location>
        <topology>Peripheral membrane protein</topology>
        <orientation evidence="6">Lumenal side</orientation>
    </subcellularLocation>
    <text evidence="10">Located in RE-derived vesicles hosting the replication complex.</text>
</comment>
<comment type="subcellular location">
    <molecule>Non-structural protein 2A</molecule>
    <subcellularLocation>
        <location evidence="3">Host endoplasmic reticulum membrane</location>
        <topology evidence="6">Multi-pass membrane protein</topology>
    </subcellularLocation>
</comment>
<comment type="subcellular location">
    <molecule>Serine protease subunit NS2B</molecule>
    <subcellularLocation>
        <location>Host endoplasmic reticulum membrane</location>
        <topology evidence="6">Multi-pass membrane protein</topology>
    </subcellularLocation>
</comment>
<comment type="subcellular location">
    <molecule>Serine protease NS3</molecule>
    <subcellularLocation>
        <location evidence="16">Host endoplasmic reticulum membrane</location>
        <topology evidence="16">Peripheral membrane protein</topology>
        <orientation evidence="16">Cytoplasmic side</orientation>
    </subcellularLocation>
    <text evidence="16">Remains non-covalently associated to serine protease subunit NS2B.</text>
</comment>
<comment type="subcellular location">
    <molecule>Non-structural protein 4A</molecule>
    <subcellularLocation>
        <location evidence="3">Host endoplasmic reticulum membrane</location>
        <topology evidence="6">Multi-pass membrane protein</topology>
    </subcellularLocation>
    <text evidence="6">Located in RE-associated vesicles hosting the replication complex.</text>
</comment>
<comment type="subcellular location">
    <molecule>Non-structural protein 4B</molecule>
    <subcellularLocation>
        <location evidence="6">Host endoplasmic reticulum membrane</location>
        <topology evidence="6">Multi-pass membrane protein</topology>
    </subcellularLocation>
    <text evidence="10">Located in RE-derived vesicles hosting the replication complex.</text>
</comment>
<comment type="subcellular location">
    <molecule>RNA-directed RNA polymerase NS5</molecule>
    <subcellularLocation>
        <location>Host endoplasmic reticulum membrane</location>
        <topology>Peripheral membrane protein</topology>
        <orientation>Cytoplasmic side</orientation>
    </subcellularLocation>
    <subcellularLocation>
        <location evidence="2">Host nucleus</location>
    </subcellularLocation>
    <text evidence="6">Located in RE-associated vesicles hosting the replication complex. NS5 protein is mainly localized in the nucleus rather than in ER vesicles.</text>
</comment>
<comment type="domain">
    <text evidence="6">The transmembrane domains of the small envelope protein M and envelope protein E contain an endoplasmic reticulum retention signal.</text>
</comment>
<comment type="PTM">
    <molecule>Genome polyprotein</molecule>
    <text evidence="6">Specific enzymatic cleavages in vivo yield mature proteins. Cleavages in the lumen of endoplasmic reticulum are performed by host signal peptidase, whereas cleavages in the cytoplasmic side are performed by serine protease NS3. Signal cleavage at the 2K-4B site requires a prior NS3 protease-mediated cleavage at the 4A-2K site.</text>
</comment>
<comment type="PTM">
    <molecule>Protein prM</molecule>
    <text evidence="6">Cleaved in post-Golgi vesicles by a host furin, releasing the mature small envelope protein M, and peptide pr. This cleavage is incomplete as up to 30% of viral particles still carry uncleaved prM.</text>
</comment>
<comment type="PTM">
    <molecule>Envelope protein E</molecule>
    <text evidence="6">N-glycosylated.</text>
</comment>
<comment type="PTM">
    <molecule>Non-structural protein 1</molecule>
    <text evidence="6">N-glycosylated. The excreted form is glycosylated and this is required for efficient secretion of the protein from infected cells.</text>
</comment>
<comment type="PTM">
    <molecule>Serine protease NS3</molecule>
    <text evidence="8">Acetylated by host KAT5. Acetylation modulates NS3 RNA-binding and unwinding activities and plays an important positive role for viral replication.</text>
</comment>
<comment type="PTM">
    <molecule>RNA-directed RNA polymerase NS5</molecule>
    <text evidence="6">Phosphorylated on serines residues. This phosphorylation may trigger NS5 nuclear localization.</text>
</comment>
<comment type="similarity">
    <text evidence="17">In the N-terminal section; belongs to the class I-like SAM-binding methyltransferase superfamily. mRNA cap 0-1 NS5-type methyltransferase family.</text>
</comment>
<organismHost>
    <name type="scientific">Aedes sp.</name>
    <dbReference type="NCBI Taxonomy" id="37951"/>
</organismHost>
<organismHost>
    <name type="scientific">Aves</name>
    <dbReference type="NCBI Taxonomy" id="8782"/>
</organismHost>
<organismHost>
    <name type="scientific">Culex</name>
    <dbReference type="NCBI Taxonomy" id="7174"/>
</organismHost>
<organismHost>
    <name type="scientific">Haemagogus</name>
    <dbReference type="NCBI Taxonomy" id="7180"/>
</organismHost>
<organismHost>
    <name type="scientific">Homo sapiens</name>
    <name type="common">Human</name>
    <dbReference type="NCBI Taxonomy" id="9606"/>
</organismHost>
<organismHost>
    <name type="scientific">Molothrus bonariensis</name>
    <name type="common">Shiny cowbird</name>
    <name type="synonym">Tanagra bonariensis</name>
    <dbReference type="NCBI Taxonomy" id="84836"/>
</organismHost>
<organismHost>
    <name type="scientific">Ochlerotatus</name>
    <dbReference type="NCBI Taxonomy" id="190765"/>
</organismHost>
<organismHost>
    <name type="scientific">Psorophora</name>
    <dbReference type="NCBI Taxonomy" id="7182"/>
</organismHost>
<organismHost>
    <name type="scientific">Sabethes</name>
    <dbReference type="NCBI Taxonomy" id="53551"/>
</organismHost>
<organismHost>
    <name type="scientific">Sporophila caerulescens</name>
    <name type="common">double-collared seedeater</name>
    <dbReference type="NCBI Taxonomy" id="256689"/>
</organismHost>
<organismHost>
    <name type="scientific">Trichoprosopon</name>
    <dbReference type="NCBI Taxonomy" id="704162"/>
</organismHost>
<keyword id="KW-0002">3D-structure</keyword>
<keyword id="KW-0007">Acetylation</keyword>
<keyword id="KW-1072">Activation of host autophagy by virus</keyword>
<keyword id="KW-0067">ATP-binding</keyword>
<keyword id="KW-0167">Capsid protein</keyword>
<keyword id="KW-1165">Clathrin-mediated endocytosis of virus by host</keyword>
<keyword id="KW-0165">Cleavage on pair of basic residues</keyword>
<keyword id="KW-1015">Disulfide bond</keyword>
<keyword id="KW-1170">Fusion of virus membrane with host endosomal membrane</keyword>
<keyword id="KW-1168">Fusion of virus membrane with host membrane</keyword>
<keyword id="KW-0325">Glycoprotein</keyword>
<keyword id="KW-0347">Helicase</keyword>
<keyword id="KW-1035">Host cytoplasm</keyword>
<keyword id="KW-1038">Host endoplasmic reticulum</keyword>
<keyword id="KW-1043">Host membrane</keyword>
<keyword id="KW-1048">Host nucleus</keyword>
<keyword id="KW-0945">Host-virus interaction</keyword>
<keyword id="KW-0378">Hydrolase</keyword>
<keyword id="KW-1090">Inhibition of host innate immune response by virus</keyword>
<keyword id="KW-1114">Inhibition of host interferon signaling pathway by virus</keyword>
<keyword id="KW-1105">Inhibition of host STAT1 by virus</keyword>
<keyword id="KW-1106">Inhibition of host STAT2 by virus</keyword>
<keyword id="KW-0922">Interferon antiviral system evasion</keyword>
<keyword id="KW-0472">Membrane</keyword>
<keyword id="KW-0479">Metal-binding</keyword>
<keyword id="KW-0489">Methyltransferase</keyword>
<keyword id="KW-0506">mRNA capping</keyword>
<keyword id="KW-0507">mRNA processing</keyword>
<keyword id="KW-0547">Nucleotide-binding</keyword>
<keyword id="KW-0548">Nucleotidyltransferase</keyword>
<keyword id="KW-0597">Phosphoprotein</keyword>
<keyword id="KW-0645">Protease</keyword>
<keyword id="KW-0694">RNA-binding</keyword>
<keyword id="KW-0696">RNA-directed RNA polymerase</keyword>
<keyword id="KW-0949">S-adenosyl-L-methionine</keyword>
<keyword id="KW-0964">Secreted</keyword>
<keyword id="KW-0720">Serine protease</keyword>
<keyword id="KW-0941">Suppressor of RNA silencing</keyword>
<keyword id="KW-0804">Transcription</keyword>
<keyword id="KW-0805">Transcription regulation</keyword>
<keyword id="KW-0808">Transferase</keyword>
<keyword id="KW-0812">Transmembrane</keyword>
<keyword id="KW-1133">Transmembrane helix</keyword>
<keyword id="KW-1161">Viral attachment to host cell</keyword>
<keyword id="KW-0261">Viral envelope protein</keyword>
<keyword id="KW-0899">Viral immunoevasion</keyword>
<keyword id="KW-1162">Viral penetration into host cytoplasm</keyword>
<keyword id="KW-0693">Viral RNA replication</keyword>
<keyword id="KW-0946">Virion</keyword>
<keyword id="KW-1164">Virus endocytosis by host</keyword>
<keyword id="KW-1160">Virus entry into host cell</keyword>
<keyword id="KW-0862">Zinc</keyword>
<proteinExistence type="evidence at protein level"/>
<feature type="chain" id="PRO_0000441486" description="Genome polyprotein">
    <location>
        <begin position="1"/>
        <end position="3424"/>
    </location>
</feature>
<feature type="chain" id="PRO_0000441487" description="Capsid protein C" evidence="2">
    <location>
        <begin position="1"/>
        <end position="101"/>
    </location>
</feature>
<feature type="propeptide" id="PRO_0000441488" description="ER anchor for the capsid protein C, removed in mature form by serine protease NS3" evidence="2">
    <location>
        <begin position="102"/>
        <end position="118"/>
    </location>
</feature>
<feature type="chain" id="PRO_0000441489" description="Protein prM" evidence="2">
    <location>
        <begin position="119"/>
        <end position="285"/>
    </location>
</feature>
<feature type="chain" id="PRO_0000441490" description="Peptide pr" evidence="2">
    <location>
        <begin position="119"/>
        <end position="210"/>
    </location>
</feature>
<feature type="chain" id="PRO_0000441491" description="Small envelope protein M" evidence="2">
    <location>
        <begin position="211"/>
        <end position="285"/>
    </location>
</feature>
<feature type="chain" id="PRO_0000441492" description="Envelope protein E" evidence="2">
    <location>
        <begin position="286"/>
        <end position="786"/>
    </location>
</feature>
<feature type="chain" id="PRO_0000441493" description="Non-structural protein 1" evidence="2">
    <location>
        <begin position="787"/>
        <end position="1139"/>
    </location>
</feature>
<feature type="chain" id="PRO_0000441494" description="Non-structural protein 2A" evidence="2">
    <location>
        <begin position="1140"/>
        <end position="1366"/>
    </location>
</feature>
<feature type="chain" id="PRO_0000441495" description="Serine protease subunit NS2B" evidence="2">
    <location>
        <begin position="1367"/>
        <end position="1497"/>
    </location>
</feature>
<feature type="chain" id="PRO_0000441496" description="Serine protease NS3" evidence="2">
    <location>
        <begin position="1498"/>
        <end position="2115"/>
    </location>
</feature>
<feature type="chain" id="PRO_0000441497" description="Non-structural protein 4A" evidence="2">
    <location>
        <begin position="2116"/>
        <end position="2241"/>
    </location>
</feature>
<feature type="peptide" id="PRO_0000441498" description="Peptide 2k" evidence="2">
    <location>
        <begin position="2242"/>
        <end position="2264"/>
    </location>
</feature>
<feature type="chain" id="PRO_0000441499" description="Non-structural protein 4B" evidence="2">
    <location>
        <begin position="2265"/>
        <end position="2519"/>
    </location>
</feature>
<feature type="chain" id="PRO_0000441500" description="RNA-directed RNA polymerase NS5" evidence="2">
    <location>
        <begin position="2520"/>
        <end position="3424"/>
    </location>
</feature>
<feature type="topological domain" description="Cytoplasmic" evidence="11">
    <location>
        <begin position="2"/>
        <end position="101"/>
    </location>
</feature>
<feature type="transmembrane region" description="Helical" evidence="11">
    <location>
        <begin position="102"/>
        <end position="122"/>
    </location>
</feature>
<feature type="topological domain" description="Extracellular" evidence="11">
    <location>
        <begin position="123"/>
        <end position="244"/>
    </location>
</feature>
<feature type="transmembrane region" description="Helical" evidence="11">
    <location>
        <begin position="245"/>
        <end position="265"/>
    </location>
</feature>
<feature type="topological domain" description="Cytoplasmic" evidence="11">
    <location>
        <begin position="266"/>
        <end position="270"/>
    </location>
</feature>
<feature type="transmembrane region" description="Helical" evidence="19">
    <location>
        <begin position="271"/>
        <end position="285"/>
    </location>
</feature>
<feature type="topological domain" description="Extracellular" evidence="11">
    <location>
        <begin position="286"/>
        <end position="738"/>
    </location>
</feature>
<feature type="transmembrane region" description="Helical" evidence="11">
    <location>
        <begin position="739"/>
        <end position="759"/>
    </location>
</feature>
<feature type="topological domain" description="Cytoplasmic" evidence="11">
    <location>
        <begin position="760"/>
        <end position="765"/>
    </location>
</feature>
<feature type="transmembrane region" description="Helical" evidence="11">
    <location>
        <begin position="766"/>
        <end position="786"/>
    </location>
</feature>
<feature type="topological domain" description="Extracellular" evidence="11">
    <location>
        <begin position="787"/>
        <end position="1170"/>
    </location>
</feature>
<feature type="transmembrane region" description="Helical" evidence="11">
    <location>
        <begin position="1171"/>
        <end position="1191"/>
    </location>
</feature>
<feature type="topological domain" description="Cytoplasmic" evidence="11">
    <location>
        <begin position="1192"/>
        <end position="1213"/>
    </location>
</feature>
<feature type="transmembrane region" description="Helical" evidence="11">
    <location>
        <begin position="1214"/>
        <end position="1234"/>
    </location>
</feature>
<feature type="topological domain" description="Lumenal" evidence="11">
    <location>
        <begin position="1235"/>
        <end position="1276"/>
    </location>
</feature>
<feature type="transmembrane region" description="Helical" evidence="11">
    <location>
        <begin position="1277"/>
        <end position="1297"/>
    </location>
</feature>
<feature type="topological domain" description="Cytoplasmic" evidence="11">
    <location>
        <begin position="1298"/>
        <end position="1302"/>
    </location>
</feature>
<feature type="transmembrane region" description="Helical" evidence="11">
    <location>
        <begin position="1303"/>
        <end position="1323"/>
    </location>
</feature>
<feature type="topological domain" description="Lumenal" evidence="11">
    <location>
        <begin position="1324"/>
        <end position="1333"/>
    </location>
</feature>
<feature type="transmembrane region" description="Helical" evidence="11">
    <location>
        <begin position="1334"/>
        <end position="1354"/>
    </location>
</feature>
<feature type="topological domain" description="Cytoplasmic" evidence="11">
    <location>
        <begin position="1355"/>
        <end position="1367"/>
    </location>
</feature>
<feature type="transmembrane region" description="Helical" evidence="11">
    <location>
        <begin position="1368"/>
        <end position="1388"/>
    </location>
</feature>
<feature type="topological domain" description="Lumenal" evidence="11">
    <location>
        <begin position="1389"/>
        <end position="1391"/>
    </location>
</feature>
<feature type="transmembrane region" description="Helical" evidence="11">
    <location>
        <begin position="1392"/>
        <end position="1412"/>
    </location>
</feature>
<feature type="topological domain" description="Cytoplasmic" evidence="11">
    <location>
        <begin position="1413"/>
        <end position="1469"/>
    </location>
</feature>
<feature type="intramembrane region" description="Helical" evidence="11">
    <location>
        <begin position="1470"/>
        <end position="1490"/>
    </location>
</feature>
<feature type="topological domain" description="Cytoplasmic" evidence="11">
    <location>
        <begin position="1491"/>
        <end position="2167"/>
    </location>
</feature>
<feature type="transmembrane region" description="Helical" evidence="11">
    <location>
        <begin position="2168"/>
        <end position="2188"/>
    </location>
</feature>
<feature type="topological domain" description="Lumenal" evidence="11">
    <location>
        <begin position="2189"/>
        <end position="2190"/>
    </location>
</feature>
<feature type="intramembrane region" description="Helical" evidence="11">
    <location>
        <begin position="2191"/>
        <end position="2211"/>
    </location>
</feature>
<feature type="topological domain" description="Lumenal" evidence="11">
    <location>
        <begin position="2212"/>
        <end position="2213"/>
    </location>
</feature>
<feature type="transmembrane region" description="Helical" evidence="11">
    <location>
        <begin position="2214"/>
        <end position="2234"/>
    </location>
</feature>
<feature type="topological domain" description="Cytoplasmic" evidence="11">
    <location>
        <begin position="2235"/>
        <end position="2249"/>
    </location>
</feature>
<feature type="transmembrane region" description="Helical; Note=Signal for NS4B" evidence="19">
    <location>
        <begin position="2250"/>
        <end position="2264"/>
    </location>
</feature>
<feature type="topological domain" description="Lumenal" evidence="11">
    <location>
        <begin position="2265"/>
        <end position="2299"/>
    </location>
</feature>
<feature type="intramembrane region" description="Helical" evidence="11">
    <location>
        <begin position="2300"/>
        <end position="2320"/>
    </location>
</feature>
<feature type="topological domain" description="Lumenal" evidence="11">
    <location>
        <begin position="2321"/>
        <end position="2342"/>
    </location>
</feature>
<feature type="transmembrane region" description="Helical" evidence="11">
    <location>
        <begin position="2343"/>
        <end position="2363"/>
    </location>
</feature>
<feature type="topological domain" description="Cytoplasmic" evidence="11">
    <location>
        <begin position="2364"/>
        <end position="2371"/>
    </location>
</feature>
<feature type="transmembrane region" description="Helical" evidence="11">
    <location>
        <begin position="2372"/>
        <end position="2392"/>
    </location>
</feature>
<feature type="topological domain" description="Lumenal" evidence="11">
    <location>
        <begin position="2393"/>
        <end position="2439"/>
    </location>
</feature>
<feature type="transmembrane region" description="Helical" evidence="11">
    <location>
        <begin position="2440"/>
        <end position="2460"/>
    </location>
</feature>
<feature type="topological domain" description="Cytoplasmic" evidence="11">
    <location>
        <begin position="2461"/>
        <end position="3424"/>
    </location>
</feature>
<feature type="domain" description="Peptidase S7" evidence="16">
    <location>
        <begin position="1498"/>
        <end position="1675"/>
    </location>
</feature>
<feature type="domain" description="Helicase ATP-binding" evidence="13">
    <location>
        <begin position="1678"/>
        <end position="1834"/>
    </location>
</feature>
<feature type="domain" description="Helicase C-terminal" evidence="14">
    <location>
        <begin position="1845"/>
        <end position="2009"/>
    </location>
</feature>
<feature type="domain" description="mRNA cap 0-1 NS5-type MT" evidence="17">
    <location>
        <begin position="2520"/>
        <end position="2784"/>
    </location>
</feature>
<feature type="domain" description="RdRp catalytic" evidence="12">
    <location>
        <begin position="3048"/>
        <end position="3200"/>
    </location>
</feature>
<feature type="region of interest" description="Interaction with host EXOC1" evidence="2">
    <location>
        <begin position="2"/>
        <end position="15"/>
    </location>
</feature>
<feature type="region of interest" description="Hydrophobic; homodimerization of capsid protein C" evidence="7">
    <location>
        <begin position="35"/>
        <end position="70"/>
    </location>
</feature>
<feature type="region of interest" description="Fusion peptide" evidence="4">
    <location>
        <begin position="383"/>
        <end position="396"/>
    </location>
</feature>
<feature type="region of interest" description="Interacts with and activates NS3 protease" evidence="15">
    <location>
        <begin position="1420"/>
        <end position="1459"/>
    </location>
</feature>
<feature type="region of interest" description="Important for RNA-binding" evidence="5">
    <location>
        <begin position="1682"/>
        <end position="1685"/>
    </location>
</feature>
<feature type="region of interest" description="Disordered" evidence="18">
    <location>
        <begin position="1944"/>
        <end position="1969"/>
    </location>
</feature>
<feature type="region of interest" description="Regulates the ATPase activity of NS3 helicase" evidence="10">
    <location>
        <begin position="2160"/>
        <end position="2164"/>
    </location>
</feature>
<feature type="short sequence motif" description="DEAH box" evidence="13">
    <location>
        <begin position="1782"/>
        <end position="1785"/>
    </location>
</feature>
<feature type="active site" description="Charge relay system; for serine protease NS3 activity" evidence="16">
    <location>
        <position position="1548"/>
    </location>
</feature>
<feature type="active site" description="Charge relay system; for serine protease NS3 activity" evidence="16">
    <location>
        <position position="1572"/>
    </location>
</feature>
<feature type="active site" description="Charge relay system; for serine protease NS3 activity" evidence="16">
    <location>
        <position position="1632"/>
    </location>
</feature>
<feature type="active site" description="For 2'-O-MTase activity" evidence="9">
    <location>
        <position position="2580"/>
    </location>
</feature>
<feature type="active site" description="For 2'-O-MTase activity" evidence="9">
    <location>
        <position position="2665"/>
    </location>
</feature>
<feature type="active site" description="For 2'-O-MTase activity" evidence="9">
    <location>
        <position position="2700"/>
    </location>
</feature>
<feature type="active site" description="For 2'-O-MTase activity" evidence="9">
    <location>
        <position position="2736"/>
    </location>
</feature>
<feature type="binding site" evidence="13">
    <location>
        <begin position="1691"/>
        <end position="1698"/>
    </location>
    <ligand>
        <name>ATP</name>
        <dbReference type="ChEBI" id="CHEBI:30616"/>
    </ligand>
</feature>
<feature type="binding site" evidence="17">
    <location>
        <position position="2575"/>
    </location>
    <ligand>
        <name>S-adenosyl-L-methionine</name>
        <dbReference type="ChEBI" id="CHEBI:59789"/>
    </ligand>
</feature>
<feature type="binding site" evidence="17">
    <location>
        <position position="2605"/>
    </location>
    <ligand>
        <name>S-adenosyl-L-methionine</name>
        <dbReference type="ChEBI" id="CHEBI:59789"/>
    </ligand>
</feature>
<feature type="binding site" evidence="17">
    <location>
        <position position="2606"/>
    </location>
    <ligand>
        <name>S-adenosyl-L-methionine</name>
        <dbReference type="ChEBI" id="CHEBI:59789"/>
    </ligand>
</feature>
<feature type="binding site" evidence="17">
    <location>
        <position position="2623"/>
    </location>
    <ligand>
        <name>S-adenosyl-L-methionine</name>
        <dbReference type="ChEBI" id="CHEBI:59789"/>
    </ligand>
</feature>
<feature type="binding site" evidence="17">
    <location>
        <position position="2624"/>
    </location>
    <ligand>
        <name>S-adenosyl-L-methionine</name>
        <dbReference type="ChEBI" id="CHEBI:59789"/>
    </ligand>
</feature>
<feature type="binding site" evidence="17">
    <location>
        <position position="2650"/>
    </location>
    <ligand>
        <name>S-adenosyl-L-methionine</name>
        <dbReference type="ChEBI" id="CHEBI:59789"/>
    </ligand>
</feature>
<feature type="binding site" evidence="17">
    <location>
        <position position="2651"/>
    </location>
    <ligand>
        <name>S-adenosyl-L-methionine</name>
        <dbReference type="ChEBI" id="CHEBI:59789"/>
    </ligand>
</feature>
<feature type="binding site" evidence="17">
    <location>
        <position position="2666"/>
    </location>
    <ligand>
        <name>S-adenosyl-L-methionine</name>
        <dbReference type="ChEBI" id="CHEBI:59789"/>
    </ligand>
</feature>
<feature type="binding site" evidence="17">
    <location>
        <position position="2738"/>
    </location>
    <ligand>
        <name>S-adenosyl-L-methionine</name>
        <dbReference type="ChEBI" id="CHEBI:59789"/>
    </ligand>
</feature>
<feature type="binding site" evidence="3">
    <location>
        <position position="2958"/>
    </location>
    <ligand>
        <name>Zn(2+)</name>
        <dbReference type="ChEBI" id="CHEBI:29105"/>
        <label>1</label>
    </ligand>
</feature>
<feature type="binding site" evidence="3">
    <location>
        <position position="2962"/>
    </location>
    <ligand>
        <name>Zn(2+)</name>
        <dbReference type="ChEBI" id="CHEBI:29105"/>
        <label>1</label>
    </ligand>
</feature>
<feature type="binding site" evidence="3">
    <location>
        <position position="2967"/>
    </location>
    <ligand>
        <name>Zn(2+)</name>
        <dbReference type="ChEBI" id="CHEBI:29105"/>
        <label>1</label>
    </ligand>
</feature>
<feature type="binding site" evidence="3">
    <location>
        <position position="2970"/>
    </location>
    <ligand>
        <name>Zn(2+)</name>
        <dbReference type="ChEBI" id="CHEBI:29105"/>
        <label>1</label>
    </ligand>
</feature>
<feature type="binding site" evidence="3">
    <location>
        <position position="3235"/>
    </location>
    <ligand>
        <name>Zn(2+)</name>
        <dbReference type="ChEBI" id="CHEBI:29105"/>
        <label>2</label>
    </ligand>
</feature>
<feature type="binding site" evidence="3">
    <location>
        <position position="3251"/>
    </location>
    <ligand>
        <name>Zn(2+)</name>
        <dbReference type="ChEBI" id="CHEBI:29105"/>
        <label>2</label>
    </ligand>
</feature>
<feature type="binding site" evidence="3">
    <location>
        <position position="3370"/>
    </location>
    <ligand>
        <name>Zn(2+)</name>
        <dbReference type="ChEBI" id="CHEBI:29105"/>
        <label>2</label>
    </ligand>
</feature>
<feature type="site" description="Cleavage; by viral protease NS3" evidence="2">
    <location>
        <begin position="100"/>
        <end position="101"/>
    </location>
</feature>
<feature type="site" description="Cleavage; by host signal peptidase" evidence="2">
    <location>
        <begin position="118"/>
        <end position="119"/>
    </location>
</feature>
<feature type="site" description="Cleavage; by host furin" evidence="2">
    <location>
        <begin position="210"/>
        <end position="211"/>
    </location>
</feature>
<feature type="site" description="Cleavage; by host signal peptidase" evidence="2">
    <location>
        <begin position="285"/>
        <end position="286"/>
    </location>
</feature>
<feature type="site" description="Cleavage; by host signal peptidase" evidence="2">
    <location>
        <begin position="786"/>
        <end position="787"/>
    </location>
</feature>
<feature type="site" description="Cleavage; by host" evidence="2">
    <location>
        <begin position="1139"/>
        <end position="1140"/>
    </location>
</feature>
<feature type="site" description="Cleavage; by viral protease NS3" evidence="2">
    <location>
        <begin position="1366"/>
        <end position="1367"/>
    </location>
</feature>
<feature type="site" description="Cleavage; by autolysis" evidence="2">
    <location>
        <begin position="1497"/>
        <end position="1498"/>
    </location>
</feature>
<feature type="site" description="Involved in NS3 ATPase and RTPase activities" evidence="3">
    <location>
        <position position="1954"/>
    </location>
</feature>
<feature type="site" description="Involved in NS3 ATPase and RTPase activities" evidence="3">
    <location>
        <position position="1957"/>
    </location>
</feature>
<feature type="site" description="Cleavage; by autolysis" evidence="2">
    <location>
        <begin position="2115"/>
        <end position="2116"/>
    </location>
</feature>
<feature type="site" description="Cleavage; by viral protease NS3" evidence="2">
    <location>
        <begin position="2241"/>
        <end position="2242"/>
    </location>
</feature>
<feature type="site" description="Cleavage; by host signal peptidase" evidence="2">
    <location>
        <begin position="2264"/>
        <end position="2265"/>
    </location>
</feature>
<feature type="site" description="Cleavage; by viral protease NS3" evidence="2">
    <location>
        <begin position="2519"/>
        <end position="2520"/>
    </location>
</feature>
<feature type="site" description="mRNA cap binding" evidence="17">
    <location>
        <position position="2532"/>
    </location>
</feature>
<feature type="site" description="mRNA cap binding; via carbonyl oxygen" evidence="17">
    <location>
        <position position="2535"/>
    </location>
</feature>
<feature type="site" description="mRNA cap binding" evidence="17">
    <location>
        <position position="2536"/>
    </location>
</feature>
<feature type="site" description="mRNA cap binding; via carbonyl oxygen" evidence="17">
    <location>
        <position position="2538"/>
    </location>
</feature>
<feature type="site" description="mRNA cap binding" evidence="17">
    <location>
        <position position="2543"/>
    </location>
</feature>
<feature type="site" description="mRNA cap binding" evidence="17">
    <location>
        <position position="2547"/>
    </location>
</feature>
<feature type="site" description="Essential for 2'-O-methyltransferase activity" evidence="17">
    <location>
        <position position="2580"/>
    </location>
</feature>
<feature type="site" description="Essential for 2'-O-methyltransferase and N-7 methyltransferase activity" evidence="17">
    <location>
        <position position="2665"/>
    </location>
</feature>
<feature type="site" description="mRNA cap binding" evidence="17">
    <location>
        <position position="2669"/>
    </location>
</feature>
<feature type="site" description="Essential for 2'-O-methyltransferase activity" evidence="17">
    <location>
        <position position="2700"/>
    </location>
</feature>
<feature type="site" description="mRNA cap binding" evidence="17">
    <location>
        <position position="2731"/>
    </location>
</feature>
<feature type="site" description="mRNA cap binding" evidence="17">
    <location>
        <position position="2733"/>
    </location>
</feature>
<feature type="site" description="Essential for 2'-O-methyltransferase activity" evidence="17">
    <location>
        <position position="2736"/>
    </location>
</feature>
<feature type="modified residue" description="N6-acetyllysine; by host" evidence="8">
    <location>
        <position position="1886"/>
    </location>
</feature>
<feature type="modified residue" description="Phosphoserine" evidence="1">
    <location>
        <position position="2575"/>
    </location>
</feature>
<feature type="glycosylation site" description="N-linked (GlcNAc...) asparagine; by host" evidence="3">
    <location>
        <position position="133"/>
    </location>
</feature>
<feature type="glycosylation site" description="N-linked (GlcNAc...) asparagine; by host" evidence="10">
    <location>
        <position position="916"/>
    </location>
</feature>
<feature type="glycosylation site" description="N-linked (GlcNAc...) asparagine; by host" evidence="10">
    <location>
        <position position="993"/>
    </location>
</feature>
<feature type="disulfide bond" evidence="2">
    <location>
        <begin position="288"/>
        <end position="315"/>
    </location>
</feature>
<feature type="disulfide bond" evidence="6">
    <location>
        <begin position="345"/>
        <end position="406"/>
    </location>
</feature>
<feature type="disulfide bond" evidence="2">
    <location>
        <begin position="345"/>
        <end position="401"/>
    </location>
</feature>
<feature type="disulfide bond" evidence="2">
    <location>
        <begin position="359"/>
        <end position="390"/>
    </location>
</feature>
<feature type="disulfide bond" evidence="2">
    <location>
        <begin position="377"/>
        <end position="406"/>
    </location>
</feature>
<feature type="disulfide bond" evidence="6">
    <location>
        <begin position="377"/>
        <end position="401"/>
    </location>
</feature>
<feature type="disulfide bond" evidence="2">
    <location>
        <begin position="475"/>
        <end position="573"/>
    </location>
</feature>
<feature type="disulfide bond" evidence="2">
    <location>
        <begin position="590"/>
        <end position="621"/>
    </location>
</feature>
<feature type="disulfide bond" evidence="6">
    <location>
        <begin position="790"/>
        <end position="801"/>
    </location>
</feature>
<feature type="disulfide bond" evidence="6">
    <location>
        <begin position="841"/>
        <end position="929"/>
    </location>
</feature>
<feature type="disulfide bond" evidence="6">
    <location>
        <begin position="965"/>
        <end position="1009"/>
    </location>
</feature>
<feature type="disulfide bond" evidence="6">
    <location>
        <begin position="1067"/>
        <end position="1116"/>
    </location>
</feature>
<feature type="disulfide bond" evidence="6">
    <location>
        <begin position="1078"/>
        <end position="1100"/>
    </location>
</feature>
<feature type="disulfide bond" evidence="10">
    <location>
        <begin position="1078"/>
        <end position="1099"/>
    </location>
</feature>
<feature type="disulfide bond" evidence="6">
    <location>
        <begin position="1099"/>
        <end position="1103"/>
    </location>
</feature>
<feature type="disulfide bond" evidence="10">
    <location>
        <begin position="1100"/>
        <end position="1103"/>
    </location>
</feature>
<feature type="helix" evidence="20">
    <location>
        <begin position="1678"/>
        <end position="1681"/>
    </location>
</feature>
<feature type="strand" evidence="20">
    <location>
        <begin position="1686"/>
        <end position="1689"/>
    </location>
</feature>
<feature type="helix" evidence="20">
    <location>
        <begin position="1701"/>
        <end position="1711"/>
    </location>
</feature>
<feature type="strand" evidence="20">
    <location>
        <begin position="1716"/>
        <end position="1722"/>
    </location>
</feature>
<feature type="helix" evidence="20">
    <location>
        <begin position="1723"/>
        <end position="1732"/>
    </location>
</feature>
<feature type="turn" evidence="20">
    <location>
        <begin position="1733"/>
        <end position="1735"/>
    </location>
</feature>
<feature type="strand" evidence="20">
    <location>
        <begin position="1738"/>
        <end position="1740"/>
    </location>
</feature>
<feature type="strand" evidence="20">
    <location>
        <begin position="1755"/>
        <end position="1759"/>
    </location>
</feature>
<feature type="helix" evidence="20">
    <location>
        <begin position="1760"/>
        <end position="1768"/>
    </location>
</feature>
<feature type="strand" evidence="20">
    <location>
        <begin position="1769"/>
        <end position="1771"/>
    </location>
</feature>
<feature type="strand" evidence="20">
    <location>
        <begin position="1777"/>
        <end position="1782"/>
    </location>
</feature>
<feature type="turn" evidence="20">
    <location>
        <begin position="1783"/>
        <end position="1785"/>
    </location>
</feature>
<feature type="helix" evidence="20">
    <location>
        <begin position="1789"/>
        <end position="1803"/>
    </location>
</feature>
<feature type="strand" evidence="20">
    <location>
        <begin position="1808"/>
        <end position="1812"/>
    </location>
</feature>
<feature type="strand" evidence="20">
    <location>
        <begin position="1830"/>
        <end position="1834"/>
    </location>
</feature>
<feature type="strand" evidence="20">
    <location>
        <begin position="1843"/>
        <end position="1845"/>
    </location>
</feature>
<feature type="helix" evidence="20">
    <location>
        <begin position="1847"/>
        <end position="1851"/>
    </location>
</feature>
<feature type="strand" evidence="20">
    <location>
        <begin position="1856"/>
        <end position="1859"/>
    </location>
</feature>
<feature type="helix" evidence="20">
    <location>
        <begin position="1863"/>
        <end position="1875"/>
    </location>
</feature>
<feature type="strand" evidence="20">
    <location>
        <begin position="1880"/>
        <end position="1883"/>
    </location>
</feature>
<feature type="turn" evidence="20">
    <location>
        <begin position="1885"/>
        <end position="1887"/>
    </location>
</feature>
<feature type="helix" evidence="20">
    <location>
        <begin position="1888"/>
        <end position="1891"/>
    </location>
</feature>
<feature type="helix" evidence="20">
    <location>
        <begin position="1892"/>
        <end position="1895"/>
    </location>
</feature>
<feature type="strand" evidence="20">
    <location>
        <begin position="1901"/>
        <end position="1905"/>
    </location>
</feature>
<feature type="helix" evidence="20">
    <location>
        <begin position="1907"/>
        <end position="1910"/>
    </location>
</feature>
<feature type="strand" evidence="20">
    <location>
        <begin position="1918"/>
        <end position="1922"/>
    </location>
</feature>
<feature type="strand" evidence="20">
    <location>
        <begin position="1925"/>
        <end position="1930"/>
    </location>
</feature>
<feature type="strand" evidence="20">
    <location>
        <begin position="1936"/>
        <end position="1946"/>
    </location>
</feature>
<feature type="helix" evidence="20">
    <location>
        <begin position="1948"/>
        <end position="1955"/>
    </location>
</feature>
<feature type="strand" evidence="20">
    <location>
        <begin position="1967"/>
        <end position="1971"/>
    </location>
</feature>
<feature type="helix" evidence="20">
    <location>
        <begin position="1984"/>
        <end position="1993"/>
    </location>
</feature>
<feature type="helix" evidence="20">
    <location>
        <begin position="2007"/>
        <end position="2012"/>
    </location>
</feature>
<feature type="turn" evidence="20">
    <location>
        <begin position="2017"/>
        <end position="2020"/>
    </location>
</feature>
<feature type="helix" evidence="20">
    <location>
        <begin position="2024"/>
        <end position="2035"/>
    </location>
</feature>
<feature type="helix" evidence="20">
    <location>
        <begin position="2041"/>
        <end position="2049"/>
    </location>
</feature>
<feature type="helix" evidence="20">
    <location>
        <begin position="2057"/>
        <end position="2060"/>
    </location>
</feature>
<feature type="helix" evidence="20">
    <location>
        <begin position="2065"/>
        <end position="2067"/>
    </location>
</feature>
<feature type="strand" evidence="20">
    <location>
        <begin position="2077"/>
        <end position="2079"/>
    </location>
</feature>
<feature type="strand" evidence="20">
    <location>
        <begin position="2085"/>
        <end position="2087"/>
    </location>
</feature>
<feature type="helix" evidence="20">
    <location>
        <begin position="2095"/>
        <end position="2097"/>
    </location>
</feature>
<feature type="helix" evidence="20">
    <location>
        <begin position="2101"/>
        <end position="2111"/>
    </location>
</feature>
<accession>Q32ZD7</accession>
<evidence type="ECO:0000250" key="1">
    <source>
        <dbReference type="UniProtKB" id="P03314"/>
    </source>
</evidence>
<evidence type="ECO:0000250" key="2">
    <source>
        <dbReference type="UniProtKB" id="P06935"/>
    </source>
</evidence>
<evidence type="ECO:0000250" key="3">
    <source>
        <dbReference type="UniProtKB" id="P14335"/>
    </source>
</evidence>
<evidence type="ECO:0000250" key="4">
    <source>
        <dbReference type="UniProtKB" id="P14336"/>
    </source>
</evidence>
<evidence type="ECO:0000250" key="5">
    <source>
        <dbReference type="UniProtKB" id="P14340"/>
    </source>
</evidence>
<evidence type="ECO:0000250" key="6">
    <source>
        <dbReference type="UniProtKB" id="P17763"/>
    </source>
</evidence>
<evidence type="ECO:0000250" key="7">
    <source>
        <dbReference type="UniProtKB" id="P29990"/>
    </source>
</evidence>
<evidence type="ECO:0000250" key="8">
    <source>
        <dbReference type="UniProtKB" id="Q32ZE1"/>
    </source>
</evidence>
<evidence type="ECO:0000250" key="9">
    <source>
        <dbReference type="UniProtKB" id="Q6YMS4"/>
    </source>
</evidence>
<evidence type="ECO:0000250" key="10">
    <source>
        <dbReference type="UniProtKB" id="Q9Q6P4"/>
    </source>
</evidence>
<evidence type="ECO:0000255" key="11"/>
<evidence type="ECO:0000255" key="12">
    <source>
        <dbReference type="PROSITE-ProRule" id="PRU00539"/>
    </source>
</evidence>
<evidence type="ECO:0000255" key="13">
    <source>
        <dbReference type="PROSITE-ProRule" id="PRU00541"/>
    </source>
</evidence>
<evidence type="ECO:0000255" key="14">
    <source>
        <dbReference type="PROSITE-ProRule" id="PRU00542"/>
    </source>
</evidence>
<evidence type="ECO:0000255" key="15">
    <source>
        <dbReference type="PROSITE-ProRule" id="PRU00859"/>
    </source>
</evidence>
<evidence type="ECO:0000255" key="16">
    <source>
        <dbReference type="PROSITE-ProRule" id="PRU00860"/>
    </source>
</evidence>
<evidence type="ECO:0000255" key="17">
    <source>
        <dbReference type="PROSITE-ProRule" id="PRU00924"/>
    </source>
</evidence>
<evidence type="ECO:0000256" key="18">
    <source>
        <dbReference type="SAM" id="MobiDB-lite"/>
    </source>
</evidence>
<evidence type="ECO:0000305" key="19"/>
<evidence type="ECO:0007829" key="20">
    <source>
        <dbReference type="PDB" id="7WD4"/>
    </source>
</evidence>
<organism>
    <name type="scientific">Ilheus virus</name>
    <name type="common">ILHV</name>
    <dbReference type="NCBI Taxonomy" id="59563"/>
    <lineage>
        <taxon>Viruses</taxon>
        <taxon>Riboviria</taxon>
        <taxon>Orthornavirae</taxon>
        <taxon>Kitrinoviricota</taxon>
        <taxon>Flasuviricetes</taxon>
        <taxon>Amarillovirales</taxon>
        <taxon>Flaviviridae</taxon>
        <taxon>Orthoflavivirus</taxon>
        <taxon>Orthoflavivirus ilheusense</taxon>
    </lineage>
</organism>